<reference key="1">
    <citation type="journal article" date="2001" name="Proc. Natl. Acad. Sci. U.S.A.">
        <title>Complete genomic sequence of Pasteurella multocida Pm70.</title>
        <authorList>
            <person name="May B.J."/>
            <person name="Zhang Q."/>
            <person name="Li L.L."/>
            <person name="Paustian M.L."/>
            <person name="Whittam T.S."/>
            <person name="Kapur V."/>
        </authorList>
    </citation>
    <scope>NUCLEOTIDE SEQUENCE [LARGE SCALE GENOMIC DNA]</scope>
    <source>
        <strain>Pm70</strain>
    </source>
</reference>
<protein>
    <recommendedName>
        <fullName evidence="1">Probable alpha-L-glutamate ligase</fullName>
        <ecNumber evidence="1">6.3.2.-</ecNumber>
    </recommendedName>
</protein>
<gene>
    <name evidence="1" type="primary">rimK</name>
    <name type="ordered locus">PM0826</name>
</gene>
<organism>
    <name type="scientific">Pasteurella multocida (strain Pm70)</name>
    <dbReference type="NCBI Taxonomy" id="272843"/>
    <lineage>
        <taxon>Bacteria</taxon>
        <taxon>Pseudomonadati</taxon>
        <taxon>Pseudomonadota</taxon>
        <taxon>Gammaproteobacteria</taxon>
        <taxon>Pasteurellales</taxon>
        <taxon>Pasteurellaceae</taxon>
        <taxon>Pasteurella</taxon>
    </lineage>
</organism>
<comment type="cofactor">
    <cofactor evidence="1">
        <name>Mg(2+)</name>
        <dbReference type="ChEBI" id="CHEBI:18420"/>
    </cofactor>
    <cofactor evidence="1">
        <name>Mn(2+)</name>
        <dbReference type="ChEBI" id="CHEBI:29035"/>
    </cofactor>
    <text evidence="1">Binds 2 magnesium or manganese ions per subunit.</text>
</comment>
<comment type="similarity">
    <text evidence="1">Belongs to the RimK family.</text>
</comment>
<sequence length="313" mass="34599">MKLLMLCREPRLYSCQRLKEAAENSGHQMDILDPNRCLLKLSENSPHFELIYQATMEHEPSRLLNYDAVIPRFGSQSTKMGCAVLRHFEAQNIPCLNSATAFLQARDKWQSLQMLMAQGIAIPHSLLAGPEFQAPSTMQYVQSPTILKTLSGAQGIGVILAEKRQSAVSILETLKQADVSVLAQEFIEEANGADLRCFVIGERVVASMQRISQNGEFRANFHRGGLAEKVSLSEAEKTMAVKATKALGLDVAGVDLIRAKRGTLVLEVNASPGLEMIEKTSGIDIALQMIVHLEKKYQALQNVTKTIELRSHK</sequence>
<keyword id="KW-0067">ATP-binding</keyword>
<keyword id="KW-0436">Ligase</keyword>
<keyword id="KW-0460">Magnesium</keyword>
<keyword id="KW-0464">Manganese</keyword>
<keyword id="KW-0479">Metal-binding</keyword>
<keyword id="KW-0547">Nucleotide-binding</keyword>
<keyword id="KW-0648">Protein biosynthesis</keyword>
<keyword id="KW-1185">Reference proteome</keyword>
<proteinExistence type="inferred from homology"/>
<name>RIMK_PASMU</name>
<dbReference type="EC" id="6.3.2.-" evidence="1"/>
<dbReference type="EMBL" id="AE004439">
    <property type="protein sequence ID" value="AAK02910.1"/>
    <property type="molecule type" value="Genomic_DNA"/>
</dbReference>
<dbReference type="RefSeq" id="WP_010906868.1">
    <property type="nucleotide sequence ID" value="NC_002663.1"/>
</dbReference>
<dbReference type="SMR" id="Q9CMJ8"/>
<dbReference type="STRING" id="272843.PM0826"/>
<dbReference type="EnsemblBacteria" id="AAK02910">
    <property type="protein sequence ID" value="AAK02910"/>
    <property type="gene ID" value="PM0826"/>
</dbReference>
<dbReference type="KEGG" id="pmu:PM0826"/>
<dbReference type="PATRIC" id="fig|272843.6.peg.836"/>
<dbReference type="HOGENOM" id="CLU_054353_0_1_6"/>
<dbReference type="OrthoDB" id="3865600at2"/>
<dbReference type="Proteomes" id="UP000000809">
    <property type="component" value="Chromosome"/>
</dbReference>
<dbReference type="GO" id="GO:0005737">
    <property type="term" value="C:cytoplasm"/>
    <property type="evidence" value="ECO:0007669"/>
    <property type="project" value="TreeGrafter"/>
</dbReference>
<dbReference type="GO" id="GO:0005524">
    <property type="term" value="F:ATP binding"/>
    <property type="evidence" value="ECO:0007669"/>
    <property type="project" value="UniProtKB-UniRule"/>
</dbReference>
<dbReference type="GO" id="GO:0046872">
    <property type="term" value="F:metal ion binding"/>
    <property type="evidence" value="ECO:0007669"/>
    <property type="project" value="UniProtKB-KW"/>
</dbReference>
<dbReference type="GO" id="GO:0018169">
    <property type="term" value="F:ribosomal S6-glutamic acid ligase activity"/>
    <property type="evidence" value="ECO:0007669"/>
    <property type="project" value="TreeGrafter"/>
</dbReference>
<dbReference type="GO" id="GO:0036211">
    <property type="term" value="P:protein modification process"/>
    <property type="evidence" value="ECO:0007669"/>
    <property type="project" value="InterPro"/>
</dbReference>
<dbReference type="GO" id="GO:0009432">
    <property type="term" value="P:SOS response"/>
    <property type="evidence" value="ECO:0007669"/>
    <property type="project" value="TreeGrafter"/>
</dbReference>
<dbReference type="GO" id="GO:0006412">
    <property type="term" value="P:translation"/>
    <property type="evidence" value="ECO:0007669"/>
    <property type="project" value="UniProtKB-KW"/>
</dbReference>
<dbReference type="FunFam" id="3.30.470.20:FF:000058">
    <property type="entry name" value="Alpha-aminoadipate--LysW ligase LysX protein"/>
    <property type="match status" value="1"/>
</dbReference>
<dbReference type="Gene3D" id="3.40.50.20">
    <property type="match status" value="1"/>
</dbReference>
<dbReference type="Gene3D" id="3.30.1490.20">
    <property type="entry name" value="ATP-grasp fold, A domain"/>
    <property type="match status" value="1"/>
</dbReference>
<dbReference type="Gene3D" id="3.30.470.20">
    <property type="entry name" value="ATP-grasp fold, B domain"/>
    <property type="match status" value="1"/>
</dbReference>
<dbReference type="HAMAP" id="MF_01552">
    <property type="entry name" value="RimK"/>
    <property type="match status" value="1"/>
</dbReference>
<dbReference type="InterPro" id="IPR011761">
    <property type="entry name" value="ATP-grasp"/>
</dbReference>
<dbReference type="InterPro" id="IPR013651">
    <property type="entry name" value="ATP-grasp_RimK-type"/>
</dbReference>
<dbReference type="InterPro" id="IPR013815">
    <property type="entry name" value="ATP_grasp_subdomain_1"/>
</dbReference>
<dbReference type="InterPro" id="IPR023533">
    <property type="entry name" value="RimK"/>
</dbReference>
<dbReference type="InterPro" id="IPR041107">
    <property type="entry name" value="Rimk_N"/>
</dbReference>
<dbReference type="InterPro" id="IPR004666">
    <property type="entry name" value="Rp_bS6_RimK/Lys_biosynth_LsyX"/>
</dbReference>
<dbReference type="NCBIfam" id="TIGR00768">
    <property type="entry name" value="rimK_fam"/>
    <property type="match status" value="1"/>
</dbReference>
<dbReference type="PANTHER" id="PTHR21621:SF7">
    <property type="entry name" value="RIBOSOMAL PROTEIN BS6--L-GLUTAMATE LIGASE"/>
    <property type="match status" value="1"/>
</dbReference>
<dbReference type="PANTHER" id="PTHR21621">
    <property type="entry name" value="RIBOSOMAL PROTEIN S6 MODIFICATION PROTEIN"/>
    <property type="match status" value="1"/>
</dbReference>
<dbReference type="Pfam" id="PF08443">
    <property type="entry name" value="RimK"/>
    <property type="match status" value="1"/>
</dbReference>
<dbReference type="Pfam" id="PF18030">
    <property type="entry name" value="Rimk_N"/>
    <property type="match status" value="1"/>
</dbReference>
<dbReference type="SUPFAM" id="SSF56059">
    <property type="entry name" value="Glutathione synthetase ATP-binding domain-like"/>
    <property type="match status" value="1"/>
</dbReference>
<dbReference type="PROSITE" id="PS50975">
    <property type="entry name" value="ATP_GRASP"/>
    <property type="match status" value="1"/>
</dbReference>
<feature type="chain" id="PRO_0000205467" description="Probable alpha-L-glutamate ligase">
    <location>
        <begin position="1"/>
        <end position="313"/>
    </location>
</feature>
<feature type="domain" description="ATP-grasp" evidence="1">
    <location>
        <begin position="112"/>
        <end position="294"/>
    </location>
</feature>
<feature type="binding site" evidence="1">
    <location>
        <position position="148"/>
    </location>
    <ligand>
        <name>ATP</name>
        <dbReference type="ChEBI" id="CHEBI:30616"/>
    </ligand>
</feature>
<feature type="binding site" evidence="1">
    <location>
        <begin position="185"/>
        <end position="186"/>
    </location>
    <ligand>
        <name>ATP</name>
        <dbReference type="ChEBI" id="CHEBI:30616"/>
    </ligand>
</feature>
<feature type="binding site" evidence="1">
    <location>
        <position position="194"/>
    </location>
    <ligand>
        <name>ATP</name>
        <dbReference type="ChEBI" id="CHEBI:30616"/>
    </ligand>
</feature>
<feature type="binding site" evidence="1">
    <location>
        <begin position="218"/>
        <end position="220"/>
    </location>
    <ligand>
        <name>ATP</name>
        <dbReference type="ChEBI" id="CHEBI:30616"/>
    </ligand>
</feature>
<feature type="binding site" evidence="1">
    <location>
        <position position="255"/>
    </location>
    <ligand>
        <name>Mg(2+)</name>
        <dbReference type="ChEBI" id="CHEBI:18420"/>
        <label>1</label>
    </ligand>
</feature>
<feature type="binding site" evidence="1">
    <location>
        <position position="255"/>
    </location>
    <ligand>
        <name>Mn(2+)</name>
        <dbReference type="ChEBI" id="CHEBI:29035"/>
        <label>1</label>
    </ligand>
</feature>
<feature type="binding site" evidence="1">
    <location>
        <position position="267"/>
    </location>
    <ligand>
        <name>Mg(2+)</name>
        <dbReference type="ChEBI" id="CHEBI:18420"/>
        <label>1</label>
    </ligand>
</feature>
<feature type="binding site" evidence="1">
    <location>
        <position position="267"/>
    </location>
    <ligand>
        <name>Mg(2+)</name>
        <dbReference type="ChEBI" id="CHEBI:18420"/>
        <label>2</label>
    </ligand>
</feature>
<feature type="binding site" evidence="1">
    <location>
        <position position="267"/>
    </location>
    <ligand>
        <name>Mn(2+)</name>
        <dbReference type="ChEBI" id="CHEBI:29035"/>
        <label>1</label>
    </ligand>
</feature>
<feature type="binding site" evidence="1">
    <location>
        <position position="267"/>
    </location>
    <ligand>
        <name>Mn(2+)</name>
        <dbReference type="ChEBI" id="CHEBI:29035"/>
        <label>2</label>
    </ligand>
</feature>
<feature type="binding site" evidence="1">
    <location>
        <position position="269"/>
    </location>
    <ligand>
        <name>Mg(2+)</name>
        <dbReference type="ChEBI" id="CHEBI:18420"/>
        <label>2</label>
    </ligand>
</feature>
<feature type="binding site" evidence="1">
    <location>
        <position position="269"/>
    </location>
    <ligand>
        <name>Mn(2+)</name>
        <dbReference type="ChEBI" id="CHEBI:29035"/>
        <label>2</label>
    </ligand>
</feature>
<evidence type="ECO:0000255" key="1">
    <source>
        <dbReference type="HAMAP-Rule" id="MF_01552"/>
    </source>
</evidence>
<accession>Q9CMJ8</accession>